<keyword id="KW-0256">Endoplasmic reticulum</keyword>
<keyword id="KW-0446">Lipid-binding</keyword>
<keyword id="KW-1185">Reference proteome</keyword>
<keyword id="KW-0964">Secreted</keyword>
<keyword id="KW-0732">Signal</keyword>
<accession>Q80XD8</accession>
<accession>Q60874</accession>
<comment type="function">
    <text evidence="1 5 6">Lipid-binding protein which promotes lipid absorption by facilitating MTTP-mediated lipid transfer (mainly triglycerides and phospholipids) and MTTP-mediated apoB lipoprotein assembly and secretion (PubMed:33168624). Protects the gastrointestinal epithelium from irradiation-induced apoptosis (PubMed:32629119). May play an important role in maintaining normal growth homeostasis in epithelial cells (By similarity). Involved in p53/TP53-dependent cell survival after DNA damage (By similarity).</text>
</comment>
<comment type="subunit">
    <text evidence="1 6">Interacts with MTTP (PubMed:33168624). Interacts with MAD1L1 (By similarity).</text>
</comment>
<comment type="subcellular location">
    <subcellularLocation>
        <location evidence="6">Secreted</location>
    </subcellularLocation>
    <subcellularLocation>
        <location evidence="6">Endoplasmic reticulum</location>
    </subcellularLocation>
</comment>
<comment type="tissue specificity">
    <text evidence="4 5 6 7">Predominantly expressed in the intestinal epithelial cells than in the liver (at protein level) (PubMed:32629119, PubMed:33168624). Abundantly expressed in the uterus during late pregnancy by uterus epithelial cells. After birth expression rapidly decreases and is no longer found in the uterus by the third day. Also highly expressed in the small intestine where it shows a proximal-distal graded expression.</text>
</comment>
<comment type="disruption phenotype">
    <text evidence="5 6">Mice show an increase in the length of the small intestine (PubMed:33168624). Gain significantly less body weight and fat mass when on high-fat diets compared with littermate controls and are prevented from hepatosteatosis (PubMed:33168624). Show increased cytokine expression and altered gut microbiota, and are significantly more susceptible to oxidative insult by ionizing radiation, showing accelerated mortality and enterocyte apoptosis (PubMed:32629119).</text>
</comment>
<dbReference type="EMBL" id="U28486">
    <property type="protein sequence ID" value="AAC24897.1"/>
    <property type="molecule type" value="mRNA"/>
</dbReference>
<dbReference type="EMBL" id="BC051092">
    <property type="protein sequence ID" value="AAH51092.1"/>
    <property type="molecule type" value="mRNA"/>
</dbReference>
<dbReference type="CCDS" id="CCDS21963.1"/>
<dbReference type="RefSeq" id="NP_033501.2">
    <property type="nucleotide sequence ID" value="NM_009475.2"/>
</dbReference>
<dbReference type="FunCoup" id="Q80XD8">
    <property type="interactions" value="148"/>
</dbReference>
<dbReference type="STRING" id="10090.ENSMUSP00000026540"/>
<dbReference type="PhosphoSitePlus" id="Q80XD8"/>
<dbReference type="CPTAC" id="non-CPTAC-3610"/>
<dbReference type="jPOST" id="Q80XD8"/>
<dbReference type="PaxDb" id="10090-ENSMUSP00000026540"/>
<dbReference type="PeptideAtlas" id="Q80XD8"/>
<dbReference type="ProteomicsDB" id="289395"/>
<dbReference type="DNASU" id="22264"/>
<dbReference type="Ensembl" id="ENSMUST00000026540.9">
    <property type="protein sequence ID" value="ENSMUSP00000026540.9"/>
    <property type="gene ID" value="ENSMUSG00000025467.9"/>
</dbReference>
<dbReference type="GeneID" id="22264"/>
<dbReference type="KEGG" id="mmu:22264"/>
<dbReference type="UCSC" id="uc009kgt.2">
    <property type="organism name" value="mouse"/>
</dbReference>
<dbReference type="AGR" id="MGI:893573"/>
<dbReference type="CTD" id="118471"/>
<dbReference type="MGI" id="MGI:893573">
    <property type="gene designation" value="Prap1"/>
</dbReference>
<dbReference type="VEuPathDB" id="HostDB:ENSMUSG00000025467"/>
<dbReference type="eggNOG" id="ENOG502TDVH">
    <property type="taxonomic scope" value="Eukaryota"/>
</dbReference>
<dbReference type="GeneTree" id="ENSGT00390000012626"/>
<dbReference type="HOGENOM" id="CLU_148119_0_0_1"/>
<dbReference type="InParanoid" id="Q80XD8"/>
<dbReference type="OMA" id="WVETEDI"/>
<dbReference type="OrthoDB" id="9938040at2759"/>
<dbReference type="PhylomeDB" id="Q80XD8"/>
<dbReference type="TreeFam" id="TF337049"/>
<dbReference type="BioGRID-ORCS" id="22264">
    <property type="hits" value="1 hit in 76 CRISPR screens"/>
</dbReference>
<dbReference type="PRO" id="PR:Q80XD8"/>
<dbReference type="Proteomes" id="UP000000589">
    <property type="component" value="Chromosome 7"/>
</dbReference>
<dbReference type="RNAct" id="Q80XD8">
    <property type="molecule type" value="protein"/>
</dbReference>
<dbReference type="Bgee" id="ENSMUSG00000025467">
    <property type="expression patterns" value="Expressed in duodenum and 68 other cell types or tissues"/>
</dbReference>
<dbReference type="GO" id="GO:0005783">
    <property type="term" value="C:endoplasmic reticulum"/>
    <property type="evidence" value="ECO:0000314"/>
    <property type="project" value="UniProtKB"/>
</dbReference>
<dbReference type="GO" id="GO:0005576">
    <property type="term" value="C:extracellular region"/>
    <property type="evidence" value="ECO:0000314"/>
    <property type="project" value="UniProtKB"/>
</dbReference>
<dbReference type="GO" id="GO:0017129">
    <property type="term" value="F:triglyceride binding"/>
    <property type="evidence" value="ECO:0000315"/>
    <property type="project" value="UniProtKB"/>
</dbReference>
<dbReference type="GO" id="GO:0071481">
    <property type="term" value="P:cellular response to X-ray"/>
    <property type="evidence" value="ECO:0000315"/>
    <property type="project" value="UniProtKB"/>
</dbReference>
<dbReference type="GO" id="GO:1902426">
    <property type="term" value="P:deactivation of mitotic spindle assembly checkpoint"/>
    <property type="evidence" value="ECO:0000250"/>
    <property type="project" value="UniProtKB"/>
</dbReference>
<dbReference type="GO" id="GO:0006974">
    <property type="term" value="P:DNA damage response"/>
    <property type="evidence" value="ECO:0000250"/>
    <property type="project" value="UniProtKB"/>
</dbReference>
<dbReference type="GO" id="GO:0030330">
    <property type="term" value="P:DNA damage response, signal transduction by p53 class mediator"/>
    <property type="evidence" value="ECO:0000250"/>
    <property type="project" value="UniProtKB"/>
</dbReference>
<dbReference type="GO" id="GO:0043066">
    <property type="term" value="P:negative regulation of apoptotic process"/>
    <property type="evidence" value="ECO:0000315"/>
    <property type="project" value="UniProtKB"/>
</dbReference>
<dbReference type="GO" id="GO:1904731">
    <property type="term" value="P:positive regulation of intestinal lipid absorption"/>
    <property type="evidence" value="ECO:0000315"/>
    <property type="project" value="UniProtKB"/>
</dbReference>
<dbReference type="GO" id="GO:2001140">
    <property type="term" value="P:positive regulation of phospholipid transport"/>
    <property type="evidence" value="ECO:0000315"/>
    <property type="project" value="UniProtKB"/>
</dbReference>
<dbReference type="GO" id="GO:1905885">
    <property type="term" value="P:positive regulation of triglyceride transport"/>
    <property type="evidence" value="ECO:0000315"/>
    <property type="project" value="UniProtKB"/>
</dbReference>
<dbReference type="InterPro" id="IPR027922">
    <property type="entry name" value="PRAP"/>
</dbReference>
<dbReference type="PANTHER" id="PTHR37861">
    <property type="entry name" value="PROLINE-RICH ACIDIC PROTEIN 1"/>
    <property type="match status" value="1"/>
</dbReference>
<dbReference type="PANTHER" id="PTHR37861:SF1">
    <property type="entry name" value="PROLINE-RICH ACIDIC PROTEIN 1"/>
    <property type="match status" value="1"/>
</dbReference>
<dbReference type="Pfam" id="PF15314">
    <property type="entry name" value="PRAP"/>
    <property type="match status" value="1"/>
</dbReference>
<gene>
    <name type="primary">Prap1</name>
    <name type="synonym">Upa</name>
</gene>
<reference key="1">
    <citation type="journal article" date="1997" name="Am. J. Obstet. Gynecol.">
        <title>A novel complementary deoxyribonucleic acid is abundantly and specifically expressed in the uterus during pregnancy.</title>
        <authorList>
            <person name="Kasik J."/>
            <person name="Rice E."/>
        </authorList>
    </citation>
    <scope>NUCLEOTIDE SEQUENCE [MRNA]</scope>
    <scope>TISSUE SPECIFICITY</scope>
    <source>
        <strain>CF-1</strain>
        <tissue>Uterus</tissue>
    </source>
</reference>
<reference key="2">
    <citation type="journal article" date="2000" name="Biomed. Biochim. Acta">
        <title>Characterization and expression of the mouse pregnant specific uterus protein and its rat homologue in the intestine and uterus.</title>
        <authorList>
            <person name="Zhang J."/>
            <person name="Rajkumar N."/>
            <person name="Hooi S.C."/>
        </authorList>
    </citation>
    <scope>NUCLEOTIDE SEQUENCE [MRNA]</scope>
    <scope>TISSUE SPECIFICITY</scope>
    <source>
        <strain>Swiss albino</strain>
    </source>
</reference>
<reference key="3">
    <citation type="journal article" date="2004" name="Genome Res.">
        <title>The status, quality, and expansion of the NIH full-length cDNA project: the Mammalian Gene Collection (MGC).</title>
        <authorList>
            <consortium name="The MGC Project Team"/>
        </authorList>
    </citation>
    <scope>NUCLEOTIDE SEQUENCE [LARGE SCALE MRNA]</scope>
    <source>
        <strain>FVB/N</strain>
        <tissue>Colon</tissue>
    </source>
</reference>
<reference key="4">
    <citation type="journal article" date="2020" name="Cell. Mol. Gastroenterol. Hepatol.">
        <title>Proline-Rich Acidic Protein 1 (PRAP1) Protects the Gastrointestinal Epithelium From Irradiation-Induced Apoptosis.</title>
        <authorList>
            <person name="Wolfarth A.A."/>
            <person name="Liu X."/>
            <person name="Darby T.M."/>
            <person name="Boyer D.J."/>
            <person name="Spizman J.B."/>
            <person name="Owens J.A."/>
            <person name="Chandrasekharan B."/>
            <person name="Naudin C.R."/>
            <person name="Hanley K.Z."/>
            <person name="Robinson B.S."/>
            <person name="Ortlund E.A."/>
            <person name="Jones R.M."/>
            <person name="Neish A.S."/>
        </authorList>
    </citation>
    <scope>FUNCTION</scope>
    <scope>TISSUE SPECIFICITY</scope>
    <scope>DISRUPTION PHENOTYPE</scope>
</reference>
<reference key="5">
    <citation type="journal article" date="2020" name="J. Biol. Chem.">
        <title>PRAP1 is a novel lipid-binding protein that promotes lipid absorption by facilitating MTTP-mediated lipid transport.</title>
        <authorList>
            <person name="Peng H."/>
            <person name="Chiu T.Y."/>
            <person name="Liang Y.J."/>
            <person name="Lee C.J."/>
            <person name="Liu C.S."/>
            <person name="Suen C.S."/>
            <person name="Yen J.J."/>
            <person name="Chen H.T."/>
            <person name="Hwang M.J."/>
            <person name="Hussain M.M."/>
            <person name="Yang H.C."/>
            <person name="Yang-Yen H.F."/>
        </authorList>
    </citation>
    <scope>FUNCTION</scope>
    <scope>SUBCELLULAR LOCATION</scope>
    <scope>DISRUPTION PHENOTYPE</scope>
    <scope>TISSUE SPECIFICITY</scope>
    <scope>INTERACTION WITH MTTP</scope>
    <scope>MUTAGENESIS OF GLU-85</scope>
</reference>
<proteinExistence type="evidence at protein level"/>
<name>PRAP1_MOUSE</name>
<organism>
    <name type="scientific">Mus musculus</name>
    <name type="common">Mouse</name>
    <dbReference type="NCBI Taxonomy" id="10090"/>
    <lineage>
        <taxon>Eukaryota</taxon>
        <taxon>Metazoa</taxon>
        <taxon>Chordata</taxon>
        <taxon>Craniata</taxon>
        <taxon>Vertebrata</taxon>
        <taxon>Euteleostomi</taxon>
        <taxon>Mammalia</taxon>
        <taxon>Eutheria</taxon>
        <taxon>Euarchontoglires</taxon>
        <taxon>Glires</taxon>
        <taxon>Rodentia</taxon>
        <taxon>Myomorpha</taxon>
        <taxon>Muroidea</taxon>
        <taxon>Muridae</taxon>
        <taxon>Murinae</taxon>
        <taxon>Mus</taxon>
        <taxon>Mus</taxon>
    </lineage>
</organism>
<protein>
    <recommendedName>
        <fullName>Proline-rich acidic protein 1</fullName>
    </recommendedName>
    <alternativeName>
        <fullName>Pregnancy-specific uterine protein</fullName>
    </alternativeName>
    <alternativeName>
        <fullName>Uterine-specific proline-rich acidic protein</fullName>
    </alternativeName>
</protein>
<sequence>MKRFLLATCLVAALLWEAGAAPAHQVPVKTKGKHVFPEQETEKVWDTRALEPLEKDNQLGPLLPEPKQKPAAAEEKRPDAMTWVETEDILSHLRSPLQGPELDLDSIDHPMSDDVQDEEVPQSRPILYRQVLQGPEEDLDHLAHSMEDS</sequence>
<evidence type="ECO:0000250" key="1">
    <source>
        <dbReference type="UniProtKB" id="Q96NZ9"/>
    </source>
</evidence>
<evidence type="ECO:0000255" key="2"/>
<evidence type="ECO:0000256" key="3">
    <source>
        <dbReference type="SAM" id="MobiDB-lite"/>
    </source>
</evidence>
<evidence type="ECO:0000269" key="4">
    <source>
    </source>
</evidence>
<evidence type="ECO:0000269" key="5">
    <source>
    </source>
</evidence>
<evidence type="ECO:0000269" key="6">
    <source>
    </source>
</evidence>
<evidence type="ECO:0000269" key="7">
    <source>
    </source>
</evidence>
<evidence type="ECO:0000305" key="8"/>
<feature type="signal peptide" evidence="2">
    <location>
        <begin position="1"/>
        <end position="20"/>
    </location>
</feature>
<feature type="chain" id="PRO_0000299417" description="Proline-rich acidic protein 1">
    <location>
        <begin position="21"/>
        <end position="149"/>
    </location>
</feature>
<feature type="region of interest" description="Disordered" evidence="3">
    <location>
        <begin position="51"/>
        <end position="79"/>
    </location>
</feature>
<feature type="region of interest" description="Disordered" evidence="3">
    <location>
        <begin position="97"/>
        <end position="122"/>
    </location>
</feature>
<feature type="compositionally biased region" description="Basic and acidic residues" evidence="3">
    <location>
        <begin position="66"/>
        <end position="79"/>
    </location>
</feature>
<feature type="mutagenesis site" description="Impairs its ability to form a complex with triglycerides and MTTP, as well as its ability to facilitate MTTP-mediated lipid transfer and MTTP-mediated apoB lipoprotein assembly and secretion." evidence="6">
    <original>E</original>
    <variation>V</variation>
    <location>
        <position position="85"/>
    </location>
</feature>
<feature type="sequence conflict" description="In Ref. 1; AAC24897." evidence="8" ref="1">
    <original>A</original>
    <variation>R</variation>
    <location>
        <position position="21"/>
    </location>
</feature>